<feature type="chain" id="PRO_0000349503" description="tRNA-specific 2-thiouridylase MnmA">
    <location>
        <begin position="1"/>
        <end position="389"/>
    </location>
</feature>
<feature type="region of interest" description="Interaction with target base in tRNA" evidence="1">
    <location>
        <begin position="121"/>
        <end position="123"/>
    </location>
</feature>
<feature type="region of interest" description="Interaction with tRNA" evidence="1">
    <location>
        <begin position="173"/>
        <end position="175"/>
    </location>
</feature>
<feature type="region of interest" description="Interaction with tRNA" evidence="1">
    <location>
        <begin position="335"/>
        <end position="336"/>
    </location>
</feature>
<feature type="active site" description="Nucleophile" evidence="1">
    <location>
        <position position="126"/>
    </location>
</feature>
<feature type="active site" description="Cysteine persulfide intermediate" evidence="1">
    <location>
        <position position="223"/>
    </location>
</feature>
<feature type="binding site" evidence="1">
    <location>
        <begin position="35"/>
        <end position="42"/>
    </location>
    <ligand>
        <name>ATP</name>
        <dbReference type="ChEBI" id="CHEBI:30616"/>
    </ligand>
</feature>
<feature type="binding site" evidence="1">
    <location>
        <position position="61"/>
    </location>
    <ligand>
        <name>ATP</name>
        <dbReference type="ChEBI" id="CHEBI:30616"/>
    </ligand>
</feature>
<feature type="binding site" evidence="1">
    <location>
        <position position="151"/>
    </location>
    <ligand>
        <name>ATP</name>
        <dbReference type="ChEBI" id="CHEBI:30616"/>
    </ligand>
</feature>
<feature type="site" description="Interaction with tRNA" evidence="1">
    <location>
        <position position="152"/>
    </location>
</feature>
<feature type="site" description="Interaction with tRNA" evidence="1">
    <location>
        <position position="368"/>
    </location>
</feature>
<feature type="disulfide bond" description="Alternate" evidence="1">
    <location>
        <begin position="126"/>
        <end position="223"/>
    </location>
</feature>
<comment type="function">
    <text evidence="1">Catalyzes the 2-thiolation of uridine at the wobble position (U34) of tRNA, leading to the formation of s(2)U34.</text>
</comment>
<comment type="catalytic activity">
    <reaction evidence="1">
        <text>S-sulfanyl-L-cysteinyl-[protein] + uridine(34) in tRNA + AH2 + ATP = 2-thiouridine(34) in tRNA + L-cysteinyl-[protein] + A + AMP + diphosphate + H(+)</text>
        <dbReference type="Rhea" id="RHEA:47032"/>
        <dbReference type="Rhea" id="RHEA-COMP:10131"/>
        <dbReference type="Rhea" id="RHEA-COMP:11726"/>
        <dbReference type="Rhea" id="RHEA-COMP:11727"/>
        <dbReference type="Rhea" id="RHEA-COMP:11728"/>
        <dbReference type="ChEBI" id="CHEBI:13193"/>
        <dbReference type="ChEBI" id="CHEBI:15378"/>
        <dbReference type="ChEBI" id="CHEBI:17499"/>
        <dbReference type="ChEBI" id="CHEBI:29950"/>
        <dbReference type="ChEBI" id="CHEBI:30616"/>
        <dbReference type="ChEBI" id="CHEBI:33019"/>
        <dbReference type="ChEBI" id="CHEBI:61963"/>
        <dbReference type="ChEBI" id="CHEBI:65315"/>
        <dbReference type="ChEBI" id="CHEBI:87170"/>
        <dbReference type="ChEBI" id="CHEBI:456215"/>
        <dbReference type="EC" id="2.8.1.13"/>
    </reaction>
</comment>
<comment type="subcellular location">
    <subcellularLocation>
        <location evidence="1">Cytoplasm</location>
    </subcellularLocation>
</comment>
<comment type="similarity">
    <text evidence="1">Belongs to the MnmA/TRMU family.</text>
</comment>
<sequence length="389" mass="43091">MTHSAILGSKTYNQYFPKLTPGQLAENGKIKVIVGMSGGVDSSVSAFILQQQGYQVEGLFMKNWEEDDDTDYCTAAADLADAQAVCDKLGIRLHKINFATEYWDNVFEHFLSEYKAGRTPNPDILCNKEIKFKAFLEYAAEDLGADYIATGHYVRRSGPDHDAHLLRGLDNNKDQSYFLHALSKKQVGQSLFPVGEVEKTVVRAVAEELGLITAKKKDSTGICFIGERKFKDFLARFLPAQPGDIKTTEGEVIGRHQGLMYHTLGQRKGLGIGGIKGKDENAWYVVEKDLKNNVLVVAQGHDNSALQSSGLIAKQLTWVSEQPLRKTLHCTVKTRYRQTDIACEVVPVNDDTVEVHFDEPQIAVTPGQSAVFYQGEECLGGGIIETQIK</sequence>
<keyword id="KW-0067">ATP-binding</keyword>
<keyword id="KW-0963">Cytoplasm</keyword>
<keyword id="KW-1015">Disulfide bond</keyword>
<keyword id="KW-0547">Nucleotide-binding</keyword>
<keyword id="KW-1185">Reference proteome</keyword>
<keyword id="KW-0694">RNA-binding</keyword>
<keyword id="KW-0808">Transferase</keyword>
<keyword id="KW-0819">tRNA processing</keyword>
<keyword id="KW-0820">tRNA-binding</keyword>
<evidence type="ECO:0000255" key="1">
    <source>
        <dbReference type="HAMAP-Rule" id="MF_00144"/>
    </source>
</evidence>
<organism>
    <name type="scientific">Actinobacillus succinogenes (strain ATCC 55618 / DSM 22257 / CCUG 43843 / 130Z)</name>
    <dbReference type="NCBI Taxonomy" id="339671"/>
    <lineage>
        <taxon>Bacteria</taxon>
        <taxon>Pseudomonadati</taxon>
        <taxon>Pseudomonadota</taxon>
        <taxon>Gammaproteobacteria</taxon>
        <taxon>Pasteurellales</taxon>
        <taxon>Pasteurellaceae</taxon>
        <taxon>Actinobacillus</taxon>
    </lineage>
</organism>
<accession>A6VLY4</accession>
<dbReference type="EC" id="2.8.1.13" evidence="1"/>
<dbReference type="EMBL" id="CP000746">
    <property type="protein sequence ID" value="ABR73981.1"/>
    <property type="molecule type" value="Genomic_DNA"/>
</dbReference>
<dbReference type="RefSeq" id="WP_012072361.1">
    <property type="nucleotide sequence ID" value="NC_009655.1"/>
</dbReference>
<dbReference type="SMR" id="A6VLY4"/>
<dbReference type="STRING" id="339671.Asuc_0607"/>
<dbReference type="KEGG" id="asu:Asuc_0607"/>
<dbReference type="eggNOG" id="COG0482">
    <property type="taxonomic scope" value="Bacteria"/>
</dbReference>
<dbReference type="HOGENOM" id="CLU_035188_1_0_6"/>
<dbReference type="OrthoDB" id="9800696at2"/>
<dbReference type="Proteomes" id="UP000001114">
    <property type="component" value="Chromosome"/>
</dbReference>
<dbReference type="GO" id="GO:0005737">
    <property type="term" value="C:cytoplasm"/>
    <property type="evidence" value="ECO:0007669"/>
    <property type="project" value="UniProtKB-SubCell"/>
</dbReference>
<dbReference type="GO" id="GO:0005524">
    <property type="term" value="F:ATP binding"/>
    <property type="evidence" value="ECO:0007669"/>
    <property type="project" value="UniProtKB-KW"/>
</dbReference>
<dbReference type="GO" id="GO:0000049">
    <property type="term" value="F:tRNA binding"/>
    <property type="evidence" value="ECO:0007669"/>
    <property type="project" value="UniProtKB-KW"/>
</dbReference>
<dbReference type="GO" id="GO:0103016">
    <property type="term" value="F:tRNA-uridine 2-sulfurtransferase activity"/>
    <property type="evidence" value="ECO:0007669"/>
    <property type="project" value="UniProtKB-EC"/>
</dbReference>
<dbReference type="GO" id="GO:0002143">
    <property type="term" value="P:tRNA wobble position uridine thiolation"/>
    <property type="evidence" value="ECO:0007669"/>
    <property type="project" value="TreeGrafter"/>
</dbReference>
<dbReference type="CDD" id="cd01998">
    <property type="entry name" value="MnmA_TRMU-like"/>
    <property type="match status" value="1"/>
</dbReference>
<dbReference type="FunFam" id="2.30.30.280:FF:000001">
    <property type="entry name" value="tRNA-specific 2-thiouridylase MnmA"/>
    <property type="match status" value="1"/>
</dbReference>
<dbReference type="FunFam" id="2.40.30.10:FF:000023">
    <property type="entry name" value="tRNA-specific 2-thiouridylase MnmA"/>
    <property type="match status" value="1"/>
</dbReference>
<dbReference type="FunFam" id="3.40.50.620:FF:000004">
    <property type="entry name" value="tRNA-specific 2-thiouridylase MnmA"/>
    <property type="match status" value="1"/>
</dbReference>
<dbReference type="Gene3D" id="2.30.30.280">
    <property type="entry name" value="Adenine nucleotide alpha hydrolases-like domains"/>
    <property type="match status" value="1"/>
</dbReference>
<dbReference type="Gene3D" id="3.40.50.620">
    <property type="entry name" value="HUPs"/>
    <property type="match status" value="1"/>
</dbReference>
<dbReference type="Gene3D" id="2.40.30.10">
    <property type="entry name" value="Translation factors"/>
    <property type="match status" value="1"/>
</dbReference>
<dbReference type="HAMAP" id="MF_00144">
    <property type="entry name" value="tRNA_thiouridyl_MnmA"/>
    <property type="match status" value="1"/>
</dbReference>
<dbReference type="InterPro" id="IPR004506">
    <property type="entry name" value="MnmA-like"/>
</dbReference>
<dbReference type="InterPro" id="IPR046885">
    <property type="entry name" value="MnmA-like_C"/>
</dbReference>
<dbReference type="InterPro" id="IPR046884">
    <property type="entry name" value="MnmA-like_central"/>
</dbReference>
<dbReference type="InterPro" id="IPR023382">
    <property type="entry name" value="MnmA-like_central_sf"/>
</dbReference>
<dbReference type="InterPro" id="IPR014729">
    <property type="entry name" value="Rossmann-like_a/b/a_fold"/>
</dbReference>
<dbReference type="NCBIfam" id="NF001138">
    <property type="entry name" value="PRK00143.1"/>
    <property type="match status" value="1"/>
</dbReference>
<dbReference type="NCBIfam" id="TIGR00420">
    <property type="entry name" value="trmU"/>
    <property type="match status" value="1"/>
</dbReference>
<dbReference type="PANTHER" id="PTHR11933:SF5">
    <property type="entry name" value="MITOCHONDRIAL TRNA-SPECIFIC 2-THIOURIDYLASE 1"/>
    <property type="match status" value="1"/>
</dbReference>
<dbReference type="PANTHER" id="PTHR11933">
    <property type="entry name" value="TRNA 5-METHYLAMINOMETHYL-2-THIOURIDYLATE -METHYLTRANSFERASE"/>
    <property type="match status" value="1"/>
</dbReference>
<dbReference type="Pfam" id="PF03054">
    <property type="entry name" value="tRNA_Me_trans"/>
    <property type="match status" value="1"/>
</dbReference>
<dbReference type="Pfam" id="PF20258">
    <property type="entry name" value="tRNA_Me_trans_C"/>
    <property type="match status" value="1"/>
</dbReference>
<dbReference type="Pfam" id="PF20259">
    <property type="entry name" value="tRNA_Me_trans_M"/>
    <property type="match status" value="1"/>
</dbReference>
<dbReference type="SUPFAM" id="SSF52402">
    <property type="entry name" value="Adenine nucleotide alpha hydrolases-like"/>
    <property type="match status" value="1"/>
</dbReference>
<reference key="1">
    <citation type="journal article" date="2010" name="BMC Genomics">
        <title>A genomic perspective on the potential of Actinobacillus succinogenes for industrial succinate production.</title>
        <authorList>
            <person name="McKinlay J.B."/>
            <person name="Laivenieks M."/>
            <person name="Schindler B.D."/>
            <person name="McKinlay A.A."/>
            <person name="Siddaramappa S."/>
            <person name="Challacombe J.F."/>
            <person name="Lowry S.R."/>
            <person name="Clum A."/>
            <person name="Lapidus A.L."/>
            <person name="Burkhart K.B."/>
            <person name="Harkins V."/>
            <person name="Vieille C."/>
        </authorList>
    </citation>
    <scope>NUCLEOTIDE SEQUENCE [LARGE SCALE GENOMIC DNA]</scope>
    <source>
        <strain>ATCC 55618 / DSM 22257 / CCUG 43843 / 130Z</strain>
    </source>
</reference>
<proteinExistence type="inferred from homology"/>
<protein>
    <recommendedName>
        <fullName evidence="1">tRNA-specific 2-thiouridylase MnmA</fullName>
        <ecNumber evidence="1">2.8.1.13</ecNumber>
    </recommendedName>
</protein>
<gene>
    <name evidence="1" type="primary">mnmA</name>
    <name type="ordered locus">Asuc_0607</name>
</gene>
<name>MNMA_ACTSZ</name>